<feature type="chain" id="PRO_0000305930" description="H(+)/Cl(-) exchange transporter 5">
    <location>
        <begin position="1"/>
        <end position="816"/>
    </location>
</feature>
<feature type="topological domain" description="Cytoplasmic" evidence="1">
    <location>
        <begin position="1"/>
        <end position="124"/>
    </location>
</feature>
<feature type="transmembrane region" description="Helical" evidence="1">
    <location>
        <begin position="125"/>
        <end position="162"/>
    </location>
</feature>
<feature type="transmembrane region" description="Helical" evidence="1">
    <location>
        <begin position="208"/>
        <end position="231"/>
    </location>
</feature>
<feature type="intramembrane region" description="Helical" evidence="1">
    <location>
        <begin position="240"/>
        <end position="247"/>
    </location>
</feature>
<feature type="transmembrane region" description="Helical" evidence="1">
    <location>
        <begin position="256"/>
        <end position="275"/>
    </location>
</feature>
<feature type="transmembrane region" description="Helical" evidence="1">
    <location>
        <begin position="281"/>
        <end position="300"/>
    </location>
</feature>
<feature type="intramembrane region" description="Helical" evidence="1">
    <location>
        <begin position="312"/>
        <end position="324"/>
    </location>
</feature>
<feature type="intramembrane region" description="Helical" evidence="1">
    <location>
        <begin position="328"/>
        <end position="336"/>
    </location>
</feature>
<feature type="transmembrane region" description="Helical" evidence="1">
    <location>
        <begin position="348"/>
        <end position="366"/>
    </location>
</feature>
<feature type="transmembrane region" description="Helical" evidence="1">
    <location>
        <begin position="389"/>
        <end position="414"/>
    </location>
</feature>
<feature type="transmembrane region" description="Helical" evidence="1">
    <location>
        <begin position="422"/>
        <end position="442"/>
    </location>
</feature>
<feature type="transmembrane region" description="Helical" evidence="1">
    <location>
        <begin position="498"/>
        <end position="518"/>
    </location>
</feature>
<feature type="transmembrane region" description="Helical" evidence="1">
    <location>
        <begin position="523"/>
        <end position="542"/>
    </location>
</feature>
<feature type="intramembrane region" description="Helical" evidence="1">
    <location>
        <begin position="570"/>
        <end position="584"/>
    </location>
</feature>
<feature type="intramembrane region" description="Note=Loop between two helices" evidence="1">
    <location>
        <begin position="585"/>
        <end position="587"/>
    </location>
</feature>
<feature type="intramembrane region" description="Helical" evidence="1">
    <location>
        <begin position="588"/>
        <end position="599"/>
    </location>
</feature>
<feature type="intramembrane region" description="Note=Loop between two helices" evidence="1">
    <location>
        <begin position="600"/>
        <end position="604"/>
    </location>
</feature>
<feature type="transmembrane region" description="Helical" evidence="1">
    <location>
        <begin position="605"/>
        <end position="622"/>
    </location>
</feature>
<feature type="topological domain" description="Cytoplasmic" evidence="1">
    <location>
        <begin position="623"/>
        <end position="816"/>
    </location>
</feature>
<feature type="domain" description="CBS 1" evidence="3">
    <location>
        <begin position="656"/>
        <end position="720"/>
    </location>
</feature>
<feature type="domain" description="CBS 2" evidence="3">
    <location>
        <begin position="752"/>
        <end position="812"/>
    </location>
</feature>
<feature type="short sequence motif" description="Selectivity filter part_1" evidence="1">
    <location>
        <begin position="237"/>
        <end position="241"/>
    </location>
</feature>
<feature type="short sequence motif" description="Selectivity filter part_2" evidence="1">
    <location>
        <begin position="279"/>
        <end position="283"/>
    </location>
</feature>
<feature type="short sequence motif" description="Selectivity filter part_3" evidence="1">
    <location>
        <begin position="523"/>
        <end position="527"/>
    </location>
</feature>
<feature type="binding site" evidence="1">
    <location>
        <position position="238"/>
    </location>
    <ligand>
        <name>chloride</name>
        <dbReference type="ChEBI" id="CHEBI:17996"/>
    </ligand>
</feature>
<feature type="binding site" evidence="1">
    <location>
        <position position="525"/>
    </location>
    <ligand>
        <name>chloride</name>
        <dbReference type="ChEBI" id="CHEBI:17996"/>
    </ligand>
</feature>
<feature type="binding site" evidence="1">
    <location>
        <position position="628"/>
    </location>
    <ligand>
        <name>chloride</name>
        <dbReference type="ChEBI" id="CHEBI:17996"/>
    </ligand>
</feature>
<feature type="binding site" evidence="2">
    <location>
        <position position="666"/>
    </location>
    <ligand>
        <name>ATP</name>
        <dbReference type="ChEBI" id="CHEBI:30616"/>
    </ligand>
</feature>
<feature type="binding site" evidence="2">
    <location>
        <begin position="687"/>
        <end position="689"/>
    </location>
    <ligand>
        <name>ATP</name>
        <dbReference type="ChEBI" id="CHEBI:30616"/>
    </ligand>
</feature>
<feature type="binding site" evidence="2">
    <location>
        <begin position="794"/>
        <end position="797"/>
    </location>
    <ligand>
        <name>ATP</name>
        <dbReference type="ChEBI" id="CHEBI:30616"/>
    </ligand>
</feature>
<feature type="site" description="Mediates proton transfer from the outer aqueous phase to the interior of the protein; involved in linking H(+) and Cl(-) transport" evidence="1">
    <location>
        <position position="281"/>
    </location>
</feature>
<feature type="site" description="Mediates proton transfer from the protein to the inner aqueous phase" evidence="1">
    <location>
        <position position="338"/>
    </location>
</feature>
<feature type="splice variant" id="VSP_060658" description="In isoform 2." evidence="4">
    <location>
        <begin position="1"/>
        <end position="70"/>
    </location>
</feature>
<reference key="1">
    <citation type="submission" date="1999-10" db="EMBL/GenBank/DDBJ databases">
        <title>Ion channels in cornea epithelia.</title>
        <authorList>
            <person name="Rae J.L."/>
        </authorList>
    </citation>
    <scope>NUCLEOTIDE SEQUENCE [MRNA] (ISOFORM 2)</scope>
    <source>
        <strain>New Zealand white</strain>
        <tissue>Corneal epithelium</tissue>
    </source>
</reference>
<reference evidence="5" key="2">
    <citation type="journal article" date="2011" name="Nature">
        <title>A high-resolution map of human evolutionary constraint using 29 mammals.</title>
        <authorList>
            <person name="Lindblad-Toh K."/>
            <person name="Garber M."/>
            <person name="Zuk O."/>
            <person name="Lin M.F."/>
            <person name="Parker B.J."/>
            <person name="Washietl S."/>
            <person name="Kheradpour P."/>
            <person name="Ernst J."/>
            <person name="Jordan G."/>
            <person name="Mauceli E."/>
            <person name="Ward L.D."/>
            <person name="Lowe C.B."/>
            <person name="Holloway A.K."/>
            <person name="Clamp M."/>
            <person name="Gnerre S."/>
            <person name="Alfoldi J."/>
            <person name="Beal K."/>
            <person name="Chang J."/>
            <person name="Clawson H."/>
            <person name="Cuff J."/>
            <person name="Di Palma F."/>
            <person name="Fitzgerald S."/>
            <person name="Flicek P."/>
            <person name="Guttman M."/>
            <person name="Hubisz M.J."/>
            <person name="Jaffe D.B."/>
            <person name="Jungreis I."/>
            <person name="Kent W.J."/>
            <person name="Kostka D."/>
            <person name="Lara M."/>
            <person name="Martins A.L."/>
            <person name="Massingham T."/>
            <person name="Moltke I."/>
            <person name="Raney B.J."/>
            <person name="Rasmussen M.D."/>
            <person name="Robinson J."/>
            <person name="Stark A."/>
            <person name="Vilella A.J."/>
            <person name="Wen J."/>
            <person name="Xie X."/>
            <person name="Zody M.C."/>
            <person name="Baldwin J."/>
            <person name="Bloom T."/>
            <person name="Chin C.W."/>
            <person name="Heiman D."/>
            <person name="Nicol R."/>
            <person name="Nusbaum C."/>
            <person name="Young S."/>
            <person name="Wilkinson J."/>
            <person name="Worley K.C."/>
            <person name="Kovar C.L."/>
            <person name="Muzny D.M."/>
            <person name="Gibbs R.A."/>
            <person name="Cree A."/>
            <person name="Dihn H.H."/>
            <person name="Fowler G."/>
            <person name="Jhangiani S."/>
            <person name="Joshi V."/>
            <person name="Lee S."/>
            <person name="Lewis L.R."/>
            <person name="Nazareth L.V."/>
            <person name="Okwuonu G."/>
            <person name="Santibanez J."/>
            <person name="Warren W.C."/>
            <person name="Mardis E.R."/>
            <person name="Weinstock G.M."/>
            <person name="Wilson R.K."/>
            <person name="Delehaunty K."/>
            <person name="Dooling D."/>
            <person name="Fronik C."/>
            <person name="Fulton L."/>
            <person name="Fulton B."/>
            <person name="Graves T."/>
            <person name="Minx P."/>
            <person name="Sodergren E."/>
            <person name="Birney E."/>
            <person name="Margulies E.H."/>
            <person name="Herrero J."/>
            <person name="Green E.D."/>
            <person name="Haussler D."/>
            <person name="Siepel A."/>
            <person name="Goldman N."/>
            <person name="Pollard K.S."/>
            <person name="Pedersen J.S."/>
            <person name="Lander E.S."/>
            <person name="Kellis M."/>
        </authorList>
    </citation>
    <scope>NUCLEOTIDE SEQUENCE [LARGE SCALE GENOMIC DNA]</scope>
    <source>
        <strain evidence="5">Thorbecke</strain>
    </source>
</reference>
<evidence type="ECO:0000250" key="1"/>
<evidence type="ECO:0000250" key="2">
    <source>
        <dbReference type="UniProtKB" id="P51795"/>
    </source>
</evidence>
<evidence type="ECO:0000255" key="3">
    <source>
        <dbReference type="PROSITE-ProRule" id="PRU00703"/>
    </source>
</evidence>
<evidence type="ECO:0000305" key="4"/>
<evidence type="ECO:0000312" key="5">
    <source>
        <dbReference type="Proteomes" id="UP000001811"/>
    </source>
</evidence>
<organism>
    <name type="scientific">Oryctolagus cuniculus</name>
    <name type="common">Rabbit</name>
    <dbReference type="NCBI Taxonomy" id="9986"/>
    <lineage>
        <taxon>Eukaryota</taxon>
        <taxon>Metazoa</taxon>
        <taxon>Chordata</taxon>
        <taxon>Craniata</taxon>
        <taxon>Vertebrata</taxon>
        <taxon>Euteleostomi</taxon>
        <taxon>Mammalia</taxon>
        <taxon>Eutheria</taxon>
        <taxon>Euarchontoglires</taxon>
        <taxon>Glires</taxon>
        <taxon>Lagomorpha</taxon>
        <taxon>Leporidae</taxon>
        <taxon>Oryctolagus</taxon>
    </lineage>
</organism>
<sequence length="816" mass="90918">MAMWQGAMDNRGFQQGSFSSFRSSSSDEDLMDIPGTAMDFSMRDDVPPLDREIEEDKSYNGGGIGSSNRIMDFLEEPIPGVGTYDDFNTIDWVREKSRDRDRHREITNKSKESTWALIHSVSDAFSGWLLMLLIGLFSGSLAGLIDISAHWMTDLKEGICTGGFWFNHEHCCWNSENVTFEDTDKCPEWNSWSQLIINTDEGAFAYIVNYFMYVLWALLFAFLAVSLVKVFAPYACGSGIPEIKTILSGFIIRGYLGKWTLVIKTITLVLAVSSGLSLGKEGPLVHVACCCGNILCHRFNKYRKNEAKRREVLSAAAAAGVSVAFGAPIGGVLFSLEEVSYYFPLKTLWRSFFAALVAAFTLRSINPFGNSRLVLFYVEFHTPWHLFELVPFILLGIFGGLWGALFIRTNIAWCRKRKTTQLGKYPVIEVLIVTAITAILAFPNEYTRMSTSELISELFNDCGLLDSSKLCDYENRFNTSKGADLPDRPAGVGVYNAMWQLALALILKIVITIFTFGMKIPSGLFIPSMAVGAIAGRLLGVGMEQLAYYHHDWTIFNSWCSQGADCITPGLYAMVGAAACLGGVTRMTVSLVVIMFELTGGLEYIVPLMAAAMTSKWVADALGREGIYDAHIRLNGYPFLEAKEEFAHKTLAMDVMKPRRNDPLLTVLTQDSMTVEDVETIISETTYSGFPVVVSRESQRLVGFVLRRDLIISIENARKKQDGVVSTSIIYFTEHSPPMPPYTPPTLKLRNILDLSPFTVTDLTPMEIVVDIFRKLGLRQCLVTHNGRLLGIITKKDVLKHIAQMANQDPDSILFN</sequence>
<name>CLCN5_RABIT</name>
<proteinExistence type="evidence at transcript level"/>
<protein>
    <recommendedName>
        <fullName>H(+)/Cl(-) exchange transporter 5</fullName>
    </recommendedName>
    <alternativeName>
        <fullName>Chloride channel protein 5</fullName>
        <shortName>ClC-5</shortName>
    </alternativeName>
    <alternativeName>
        <fullName>Chloride transporter ClC-5</fullName>
    </alternativeName>
</protein>
<accession>Q9TTU3</accession>
<accession>G1TDH8</accession>
<gene>
    <name type="primary">CLCN5</name>
</gene>
<keyword id="KW-0025">Alternative splicing</keyword>
<keyword id="KW-0050">Antiport</keyword>
<keyword id="KW-0067">ATP-binding</keyword>
<keyword id="KW-0129">CBS domain</keyword>
<keyword id="KW-1003">Cell membrane</keyword>
<keyword id="KW-0868">Chloride</keyword>
<keyword id="KW-0967">Endosome</keyword>
<keyword id="KW-0333">Golgi apparatus</keyword>
<keyword id="KW-0406">Ion transport</keyword>
<keyword id="KW-0472">Membrane</keyword>
<keyword id="KW-0547">Nucleotide-binding</keyword>
<keyword id="KW-1185">Reference proteome</keyword>
<keyword id="KW-0677">Repeat</keyword>
<keyword id="KW-0812">Transmembrane</keyword>
<keyword id="KW-1133">Transmembrane helix</keyword>
<keyword id="KW-0813">Transport</keyword>
<keyword id="KW-0832">Ubl conjugation</keyword>
<comment type="function">
    <text evidence="2 4">Proton-coupled chloride transporter. Functions as antiport system and exchanges chloride ions against protons. Important for normal acidification of the endosome lumen. May play an important role in renal tubular function (By similarity). The CLC channel family contains both chloride channels and proton-coupled anion transporters that exchange chloride or another anion for protons. The absence of conserved gating glutamate residues is typical for family members that function as channels (Probable).</text>
</comment>
<comment type="catalytic activity">
    <reaction evidence="2">
        <text>2 chloride(in) + H(+)(out) = 2 chloride(out) + H(+)(in)</text>
        <dbReference type="Rhea" id="RHEA:29567"/>
        <dbReference type="ChEBI" id="CHEBI:15378"/>
        <dbReference type="ChEBI" id="CHEBI:17996"/>
    </reaction>
</comment>
<comment type="subunit">
    <text evidence="2">Interacts with NEDD4 and NEDD4L.</text>
</comment>
<comment type="subcellular location">
    <subcellularLocation>
        <location evidence="2">Golgi apparatus membrane</location>
        <topology evidence="2">Multi-pass membrane protein</topology>
    </subcellularLocation>
    <subcellularLocation>
        <location evidence="2">Endosome membrane</location>
        <topology evidence="2">Multi-pass membrane protein</topology>
    </subcellularLocation>
    <subcellularLocation>
        <location evidence="2">Cell membrane</location>
        <topology evidence="2">Multi-pass membrane protein</topology>
    </subcellularLocation>
</comment>
<comment type="alternative products">
    <event type="alternative splicing"/>
    <isoform>
        <id>Q9TTU3-1</id>
        <name>1</name>
        <sequence type="displayed"/>
    </isoform>
    <isoform>
        <id>Q9TTU3-2</id>
        <name>2</name>
        <sequence type="described" ref="VSP_060658"/>
    </isoform>
</comment>
<comment type="PTM">
    <text evidence="2">Ubiquitinated by NEDD4L in the presence of albumin; which promotes endocytosis and proteasomal degradation.</text>
</comment>
<comment type="similarity">
    <text evidence="4">Belongs to the chloride channel (TC 2.A.49) family. ClC-5/CLCN5 subfamily.</text>
</comment>
<dbReference type="EMBL" id="AF195523">
    <property type="protein sequence ID" value="AAF06018.1"/>
    <property type="molecule type" value="mRNA"/>
</dbReference>
<dbReference type="EMBL" id="AAGW02040220">
    <property type="status" value="NOT_ANNOTATED_CDS"/>
    <property type="molecule type" value="Genomic_DNA"/>
</dbReference>
<dbReference type="EMBL" id="AAGW02040224">
    <property type="status" value="NOT_ANNOTATED_CDS"/>
    <property type="molecule type" value="Genomic_DNA"/>
</dbReference>
<dbReference type="EMBL" id="AAGW02040223">
    <property type="status" value="NOT_ANNOTATED_CDS"/>
    <property type="molecule type" value="Genomic_DNA"/>
</dbReference>
<dbReference type="EMBL" id="AAGW02040222">
    <property type="status" value="NOT_ANNOTATED_CDS"/>
    <property type="molecule type" value="Genomic_DNA"/>
</dbReference>
<dbReference type="EMBL" id="AAGW02040221">
    <property type="status" value="NOT_ANNOTATED_CDS"/>
    <property type="molecule type" value="Genomic_DNA"/>
</dbReference>
<dbReference type="RefSeq" id="NP_001075537.1">
    <molecule id="Q9TTU3-2"/>
    <property type="nucleotide sequence ID" value="NM_001082068.1"/>
</dbReference>
<dbReference type="RefSeq" id="XP_008270559.1">
    <molecule id="Q9TTU3-1"/>
    <property type="nucleotide sequence ID" value="XM_008272337.4"/>
</dbReference>
<dbReference type="RefSeq" id="XP_008270560.1">
    <molecule id="Q9TTU3-2"/>
    <property type="nucleotide sequence ID" value="XM_008272338.4"/>
</dbReference>
<dbReference type="RefSeq" id="XP_008270561.1">
    <molecule id="Q9TTU3-2"/>
    <property type="nucleotide sequence ID" value="XM_008272339.4"/>
</dbReference>
<dbReference type="SMR" id="Q9TTU3"/>
<dbReference type="FunCoup" id="Q9TTU3">
    <property type="interactions" value="342"/>
</dbReference>
<dbReference type="STRING" id="9986.ENSOCUP00000014899"/>
<dbReference type="PaxDb" id="9986-ENSOCUP00000014899"/>
<dbReference type="Ensembl" id="ENSOCUT00000017338.4">
    <molecule id="Q9TTU3-1"/>
    <property type="protein sequence ID" value="ENSOCUP00000014899.2"/>
    <property type="gene ID" value="ENSOCUG00000017336.4"/>
</dbReference>
<dbReference type="GeneID" id="100008741"/>
<dbReference type="KEGG" id="ocu:100008741"/>
<dbReference type="CTD" id="1184"/>
<dbReference type="eggNOG" id="KOG0475">
    <property type="taxonomic scope" value="Eukaryota"/>
</dbReference>
<dbReference type="GeneTree" id="ENSGT00940000153763"/>
<dbReference type="HOGENOM" id="CLU_003181_2_1_1"/>
<dbReference type="InParanoid" id="Q9TTU3"/>
<dbReference type="OMA" id="CLDWTPW"/>
<dbReference type="OrthoDB" id="44789at2759"/>
<dbReference type="TreeFam" id="TF313867"/>
<dbReference type="Proteomes" id="UP000001811">
    <property type="component" value="Chromosome X"/>
</dbReference>
<dbReference type="Bgee" id="ENSOCUG00000017336">
    <property type="expression patterns" value="Expressed in kidney and 15 other cell types or tissues"/>
</dbReference>
<dbReference type="GO" id="GO:0045177">
    <property type="term" value="C:apical part of cell"/>
    <property type="evidence" value="ECO:0007669"/>
    <property type="project" value="Ensembl"/>
</dbReference>
<dbReference type="GO" id="GO:0005829">
    <property type="term" value="C:cytosol"/>
    <property type="evidence" value="ECO:0007669"/>
    <property type="project" value="Ensembl"/>
</dbReference>
<dbReference type="GO" id="GO:0005769">
    <property type="term" value="C:early endosome"/>
    <property type="evidence" value="ECO:0007669"/>
    <property type="project" value="TreeGrafter"/>
</dbReference>
<dbReference type="GO" id="GO:0010008">
    <property type="term" value="C:endosome membrane"/>
    <property type="evidence" value="ECO:0007669"/>
    <property type="project" value="UniProtKB-SubCell"/>
</dbReference>
<dbReference type="GO" id="GO:0000139">
    <property type="term" value="C:Golgi membrane"/>
    <property type="evidence" value="ECO:0007669"/>
    <property type="project" value="UniProtKB-SubCell"/>
</dbReference>
<dbReference type="GO" id="GO:0005886">
    <property type="term" value="C:plasma membrane"/>
    <property type="evidence" value="ECO:0007669"/>
    <property type="project" value="UniProtKB-SubCell"/>
</dbReference>
<dbReference type="GO" id="GO:0008021">
    <property type="term" value="C:synaptic vesicle"/>
    <property type="evidence" value="ECO:0007669"/>
    <property type="project" value="TreeGrafter"/>
</dbReference>
<dbReference type="GO" id="GO:0015297">
    <property type="term" value="F:antiporter activity"/>
    <property type="evidence" value="ECO:0007669"/>
    <property type="project" value="UniProtKB-KW"/>
</dbReference>
<dbReference type="GO" id="GO:0005524">
    <property type="term" value="F:ATP binding"/>
    <property type="evidence" value="ECO:0007669"/>
    <property type="project" value="UniProtKB-KW"/>
</dbReference>
<dbReference type="GO" id="GO:0042802">
    <property type="term" value="F:identical protein binding"/>
    <property type="evidence" value="ECO:0007669"/>
    <property type="project" value="Ensembl"/>
</dbReference>
<dbReference type="GO" id="GO:0005247">
    <property type="term" value="F:voltage-gated chloride channel activity"/>
    <property type="evidence" value="ECO:0007669"/>
    <property type="project" value="Ensembl"/>
</dbReference>
<dbReference type="GO" id="GO:0006897">
    <property type="term" value="P:endocytosis"/>
    <property type="evidence" value="ECO:0007669"/>
    <property type="project" value="Ensembl"/>
</dbReference>
<dbReference type="GO" id="GO:0003014">
    <property type="term" value="P:renal system process"/>
    <property type="evidence" value="ECO:0007669"/>
    <property type="project" value="Ensembl"/>
</dbReference>
<dbReference type="CDD" id="cd04591">
    <property type="entry name" value="CBS_pair_voltage-gated_CLC_euk_bac"/>
    <property type="match status" value="1"/>
</dbReference>
<dbReference type="CDD" id="cd03684">
    <property type="entry name" value="ClC_3_like"/>
    <property type="match status" value="1"/>
</dbReference>
<dbReference type="FunFam" id="3.10.580.20:FF:000001">
    <property type="entry name" value="Chloride channel protein"/>
    <property type="match status" value="1"/>
</dbReference>
<dbReference type="FunFam" id="3.90.1280.20:FF:000001">
    <property type="entry name" value="Chloride channel protein"/>
    <property type="match status" value="1"/>
</dbReference>
<dbReference type="FunFam" id="3.90.1280.20:FF:000003">
    <property type="entry name" value="Chloride channel protein"/>
    <property type="match status" value="1"/>
</dbReference>
<dbReference type="Gene3D" id="3.10.580.20">
    <property type="match status" value="1"/>
</dbReference>
<dbReference type="Gene3D" id="3.90.1280.20">
    <property type="match status" value="1"/>
</dbReference>
<dbReference type="Gene3D" id="1.10.3080.10">
    <property type="entry name" value="Clc chloride channel"/>
    <property type="match status" value="1"/>
</dbReference>
<dbReference type="InterPro" id="IPR000644">
    <property type="entry name" value="CBS_dom"/>
</dbReference>
<dbReference type="InterPro" id="IPR046342">
    <property type="entry name" value="CBS_dom_sf"/>
</dbReference>
<dbReference type="InterPro" id="IPR014743">
    <property type="entry name" value="Cl-channel_core"/>
</dbReference>
<dbReference type="InterPro" id="IPR002247">
    <property type="entry name" value="Cl_channel-5"/>
</dbReference>
<dbReference type="InterPro" id="IPR001807">
    <property type="entry name" value="ClC"/>
</dbReference>
<dbReference type="PANTHER" id="PTHR45711">
    <property type="entry name" value="CHLORIDE CHANNEL PROTEIN"/>
    <property type="match status" value="1"/>
</dbReference>
<dbReference type="PANTHER" id="PTHR45711:SF7">
    <property type="entry name" value="H(+)_CL(-) EXCHANGE TRANSPORTER 5"/>
    <property type="match status" value="1"/>
</dbReference>
<dbReference type="Pfam" id="PF00571">
    <property type="entry name" value="CBS"/>
    <property type="match status" value="2"/>
</dbReference>
<dbReference type="Pfam" id="PF00654">
    <property type="entry name" value="Voltage_CLC"/>
    <property type="match status" value="1"/>
</dbReference>
<dbReference type="PRINTS" id="PR00762">
    <property type="entry name" value="CLCHANNEL"/>
</dbReference>
<dbReference type="PRINTS" id="PR01116">
    <property type="entry name" value="CLCHANNEL5"/>
</dbReference>
<dbReference type="SMART" id="SM00116">
    <property type="entry name" value="CBS"/>
    <property type="match status" value="2"/>
</dbReference>
<dbReference type="SUPFAM" id="SSF54631">
    <property type="entry name" value="CBS-domain pair"/>
    <property type="match status" value="1"/>
</dbReference>
<dbReference type="SUPFAM" id="SSF81340">
    <property type="entry name" value="Clc chloride channel"/>
    <property type="match status" value="1"/>
</dbReference>
<dbReference type="PROSITE" id="PS51371">
    <property type="entry name" value="CBS"/>
    <property type="match status" value="2"/>
</dbReference>